<gene>
    <name evidence="1" type="primary">accD</name>
    <name type="ordered locus">IL1016</name>
</gene>
<feature type="chain" id="PRO_0000359004" description="Acetyl-coenzyme A carboxylase carboxyl transferase subunit beta">
    <location>
        <begin position="1"/>
        <end position="292"/>
    </location>
</feature>
<feature type="domain" description="CoA carboxyltransferase N-terminal" evidence="2">
    <location>
        <begin position="23"/>
        <end position="292"/>
    </location>
</feature>
<feature type="zinc finger region" description="C4-type" evidence="1">
    <location>
        <begin position="27"/>
        <end position="49"/>
    </location>
</feature>
<feature type="binding site" evidence="1">
    <location>
        <position position="27"/>
    </location>
    <ligand>
        <name>Zn(2+)</name>
        <dbReference type="ChEBI" id="CHEBI:29105"/>
    </ligand>
</feature>
<feature type="binding site" evidence="1">
    <location>
        <position position="30"/>
    </location>
    <ligand>
        <name>Zn(2+)</name>
        <dbReference type="ChEBI" id="CHEBI:29105"/>
    </ligand>
</feature>
<feature type="binding site" evidence="1">
    <location>
        <position position="46"/>
    </location>
    <ligand>
        <name>Zn(2+)</name>
        <dbReference type="ChEBI" id="CHEBI:29105"/>
    </ligand>
</feature>
<feature type="binding site" evidence="1">
    <location>
        <position position="49"/>
    </location>
    <ligand>
        <name>Zn(2+)</name>
        <dbReference type="ChEBI" id="CHEBI:29105"/>
    </ligand>
</feature>
<comment type="function">
    <text evidence="1">Component of the acetyl coenzyme A carboxylase (ACC) complex. Biotin carboxylase (BC) catalyzes the carboxylation of biotin on its carrier protein (BCCP) and then the CO(2) group is transferred by the transcarboxylase to acetyl-CoA to form malonyl-CoA.</text>
</comment>
<comment type="catalytic activity">
    <reaction evidence="1">
        <text>N(6)-carboxybiotinyl-L-lysyl-[protein] + acetyl-CoA = N(6)-biotinyl-L-lysyl-[protein] + malonyl-CoA</text>
        <dbReference type="Rhea" id="RHEA:54728"/>
        <dbReference type="Rhea" id="RHEA-COMP:10505"/>
        <dbReference type="Rhea" id="RHEA-COMP:10506"/>
        <dbReference type="ChEBI" id="CHEBI:57288"/>
        <dbReference type="ChEBI" id="CHEBI:57384"/>
        <dbReference type="ChEBI" id="CHEBI:83144"/>
        <dbReference type="ChEBI" id="CHEBI:83145"/>
        <dbReference type="EC" id="2.1.3.15"/>
    </reaction>
</comment>
<comment type="cofactor">
    <cofactor evidence="1">
        <name>Zn(2+)</name>
        <dbReference type="ChEBI" id="CHEBI:29105"/>
    </cofactor>
    <text evidence="1">Binds 1 zinc ion per subunit.</text>
</comment>
<comment type="pathway">
    <text evidence="1">Lipid metabolism; malonyl-CoA biosynthesis; malonyl-CoA from acetyl-CoA: step 1/1.</text>
</comment>
<comment type="subunit">
    <text evidence="1">Acetyl-CoA carboxylase is a heterohexamer composed of biotin carboxyl carrier protein (AccB), biotin carboxylase (AccC) and two subunits each of ACCase subunit alpha (AccA) and ACCase subunit beta (AccD).</text>
</comment>
<comment type="subcellular location">
    <subcellularLocation>
        <location evidence="1">Cytoplasm</location>
    </subcellularLocation>
</comment>
<comment type="similarity">
    <text evidence="1">Belongs to the AccD/PCCB family.</text>
</comment>
<keyword id="KW-0067">ATP-binding</keyword>
<keyword id="KW-0963">Cytoplasm</keyword>
<keyword id="KW-0275">Fatty acid biosynthesis</keyword>
<keyword id="KW-0276">Fatty acid metabolism</keyword>
<keyword id="KW-0444">Lipid biosynthesis</keyword>
<keyword id="KW-0443">Lipid metabolism</keyword>
<keyword id="KW-0479">Metal-binding</keyword>
<keyword id="KW-0547">Nucleotide-binding</keyword>
<keyword id="KW-1185">Reference proteome</keyword>
<keyword id="KW-0808">Transferase</keyword>
<keyword id="KW-0862">Zinc</keyword>
<keyword id="KW-0863">Zinc-finger</keyword>
<dbReference type="EC" id="2.1.3.15" evidence="1"/>
<dbReference type="EMBL" id="AE017340">
    <property type="protein sequence ID" value="AAV81856.1"/>
    <property type="molecule type" value="Genomic_DNA"/>
</dbReference>
<dbReference type="RefSeq" id="WP_011234267.1">
    <property type="nucleotide sequence ID" value="NC_006512.1"/>
</dbReference>
<dbReference type="SMR" id="Q5QUD9"/>
<dbReference type="STRING" id="283942.IL1016"/>
<dbReference type="GeneID" id="41336182"/>
<dbReference type="KEGG" id="ilo:IL1016"/>
<dbReference type="eggNOG" id="COG0777">
    <property type="taxonomic scope" value="Bacteria"/>
</dbReference>
<dbReference type="HOGENOM" id="CLU_015486_1_0_6"/>
<dbReference type="OrthoDB" id="9772975at2"/>
<dbReference type="UniPathway" id="UPA00655">
    <property type="reaction ID" value="UER00711"/>
</dbReference>
<dbReference type="Proteomes" id="UP000001171">
    <property type="component" value="Chromosome"/>
</dbReference>
<dbReference type="GO" id="GO:0009329">
    <property type="term" value="C:acetate CoA-transferase complex"/>
    <property type="evidence" value="ECO:0007669"/>
    <property type="project" value="TreeGrafter"/>
</dbReference>
<dbReference type="GO" id="GO:0003989">
    <property type="term" value="F:acetyl-CoA carboxylase activity"/>
    <property type="evidence" value="ECO:0007669"/>
    <property type="project" value="InterPro"/>
</dbReference>
<dbReference type="GO" id="GO:0005524">
    <property type="term" value="F:ATP binding"/>
    <property type="evidence" value="ECO:0007669"/>
    <property type="project" value="UniProtKB-KW"/>
</dbReference>
<dbReference type="GO" id="GO:0016743">
    <property type="term" value="F:carboxyl- or carbamoyltransferase activity"/>
    <property type="evidence" value="ECO:0007669"/>
    <property type="project" value="UniProtKB-UniRule"/>
</dbReference>
<dbReference type="GO" id="GO:0008270">
    <property type="term" value="F:zinc ion binding"/>
    <property type="evidence" value="ECO:0007669"/>
    <property type="project" value="UniProtKB-UniRule"/>
</dbReference>
<dbReference type="GO" id="GO:0006633">
    <property type="term" value="P:fatty acid biosynthetic process"/>
    <property type="evidence" value="ECO:0007669"/>
    <property type="project" value="UniProtKB-KW"/>
</dbReference>
<dbReference type="GO" id="GO:2001295">
    <property type="term" value="P:malonyl-CoA biosynthetic process"/>
    <property type="evidence" value="ECO:0007669"/>
    <property type="project" value="UniProtKB-UniRule"/>
</dbReference>
<dbReference type="Gene3D" id="3.90.226.10">
    <property type="entry name" value="2-enoyl-CoA Hydratase, Chain A, domain 1"/>
    <property type="match status" value="1"/>
</dbReference>
<dbReference type="HAMAP" id="MF_01395">
    <property type="entry name" value="AcetylCoA_CT_beta"/>
    <property type="match status" value="1"/>
</dbReference>
<dbReference type="InterPro" id="IPR034733">
    <property type="entry name" value="AcCoA_carboxyl_beta"/>
</dbReference>
<dbReference type="InterPro" id="IPR000438">
    <property type="entry name" value="Acetyl_CoA_COase_Trfase_b_su"/>
</dbReference>
<dbReference type="InterPro" id="IPR029045">
    <property type="entry name" value="ClpP/crotonase-like_dom_sf"/>
</dbReference>
<dbReference type="InterPro" id="IPR011762">
    <property type="entry name" value="COA_CT_N"/>
</dbReference>
<dbReference type="InterPro" id="IPR041010">
    <property type="entry name" value="Znf-ACC"/>
</dbReference>
<dbReference type="NCBIfam" id="TIGR00515">
    <property type="entry name" value="accD"/>
    <property type="match status" value="1"/>
</dbReference>
<dbReference type="PANTHER" id="PTHR42995">
    <property type="entry name" value="ACETYL-COENZYME A CARBOXYLASE CARBOXYL TRANSFERASE SUBUNIT BETA, CHLOROPLASTIC"/>
    <property type="match status" value="1"/>
</dbReference>
<dbReference type="PANTHER" id="PTHR42995:SF5">
    <property type="entry name" value="ACETYL-COENZYME A CARBOXYLASE CARBOXYL TRANSFERASE SUBUNIT BETA, CHLOROPLASTIC"/>
    <property type="match status" value="1"/>
</dbReference>
<dbReference type="Pfam" id="PF01039">
    <property type="entry name" value="Carboxyl_trans"/>
    <property type="match status" value="1"/>
</dbReference>
<dbReference type="Pfam" id="PF17848">
    <property type="entry name" value="Zn_ribbon_ACC"/>
    <property type="match status" value="1"/>
</dbReference>
<dbReference type="PRINTS" id="PR01070">
    <property type="entry name" value="ACCCTRFRASEB"/>
</dbReference>
<dbReference type="SUPFAM" id="SSF52096">
    <property type="entry name" value="ClpP/crotonase"/>
    <property type="match status" value="1"/>
</dbReference>
<dbReference type="PROSITE" id="PS50980">
    <property type="entry name" value="COA_CT_NTER"/>
    <property type="match status" value="1"/>
</dbReference>
<sequence>MSWIERILAKPKINKRRGVPEGVWSKCTACGNIIYKADLERSLNVCPKCDHHMRVTGRSRLDIFLDKDNREEIGTDLEPKDVLRFKDSKKYKDRIAAAQKSTGENDALIAEKGTVKGVPLVAVAFDFNFMGGSMASVVGAKFVLAAEVCLKHRIPLVCFSASGGARMQEALMSLMQMAKTSAALARMSEEGLPFISILTDPTMGGVSASLAMLGDIHIAEPKALIGFAGPRVIEQTVRQTLPEGFQRAEFLLEHGAIDMITDRRDMRDTVARLLAKMQNLPSTEATEVSVNE</sequence>
<name>ACCD_IDILO</name>
<evidence type="ECO:0000255" key="1">
    <source>
        <dbReference type="HAMAP-Rule" id="MF_01395"/>
    </source>
</evidence>
<evidence type="ECO:0000255" key="2">
    <source>
        <dbReference type="PROSITE-ProRule" id="PRU01136"/>
    </source>
</evidence>
<organism>
    <name type="scientific">Idiomarina loihiensis (strain ATCC BAA-735 / DSM 15497 / L2-TR)</name>
    <dbReference type="NCBI Taxonomy" id="283942"/>
    <lineage>
        <taxon>Bacteria</taxon>
        <taxon>Pseudomonadati</taxon>
        <taxon>Pseudomonadota</taxon>
        <taxon>Gammaproteobacteria</taxon>
        <taxon>Alteromonadales</taxon>
        <taxon>Idiomarinaceae</taxon>
        <taxon>Idiomarina</taxon>
    </lineage>
</organism>
<protein>
    <recommendedName>
        <fullName evidence="1">Acetyl-coenzyme A carboxylase carboxyl transferase subunit beta</fullName>
        <shortName evidence="1">ACCase subunit beta</shortName>
        <shortName evidence="1">Acetyl-CoA carboxylase carboxyltransferase subunit beta</shortName>
        <ecNumber evidence="1">2.1.3.15</ecNumber>
    </recommendedName>
</protein>
<accession>Q5QUD9</accession>
<proteinExistence type="inferred from homology"/>
<reference key="1">
    <citation type="journal article" date="2004" name="Proc. Natl. Acad. Sci. U.S.A.">
        <title>Genome sequence of the deep-sea gamma-proteobacterium Idiomarina loihiensis reveals amino acid fermentation as a source of carbon and energy.</title>
        <authorList>
            <person name="Hou S."/>
            <person name="Saw J.H."/>
            <person name="Lee K.S."/>
            <person name="Freitas T.A."/>
            <person name="Belisle C."/>
            <person name="Kawarabayasi Y."/>
            <person name="Donachie S.P."/>
            <person name="Pikina A."/>
            <person name="Galperin M.Y."/>
            <person name="Koonin E.V."/>
            <person name="Makarova K.S."/>
            <person name="Omelchenko M.V."/>
            <person name="Sorokin A."/>
            <person name="Wolf Y.I."/>
            <person name="Li Q.X."/>
            <person name="Keum Y.S."/>
            <person name="Campbell S."/>
            <person name="Denery J."/>
            <person name="Aizawa S."/>
            <person name="Shibata S."/>
            <person name="Malahoff A."/>
            <person name="Alam M."/>
        </authorList>
    </citation>
    <scope>NUCLEOTIDE SEQUENCE [LARGE SCALE GENOMIC DNA]</scope>
    <source>
        <strain>ATCC BAA-735 / DSM 15497 / L2-TR</strain>
    </source>
</reference>